<comment type="function">
    <text evidence="5">Involved in the regulation of the catabolism of D-glucosaminate.</text>
</comment>
<comment type="induction">
    <text evidence="5">Activated by D-glucosaminate and inhibited by D-glucose.</text>
</comment>
<comment type="domain">
    <text evidence="1">The PTS EIIA type-4 domain may serve a regulatory function, through its phosphorylation activity.</text>
</comment>
<comment type="disruption phenotype">
    <text evidence="5">Cells lacking this gene are unable to grow with D-glucosaminate as the sole carbon source.</text>
</comment>
<sequence length="932" mass="104936">MRRIEIVLGELERLTRGLCLADLAQETAFTAEAIGFNLGLARNSVSKDLNQLWNDGLAIKSRGRPVYFLHRQALETLLGRQLEESEREVRSVADVLPHEEHYAPDDPFTSLIGYDRSLRDAVEKGRAAVLYPHGLHVLLTGPSGVGKTFFAELMHRFACEQASGAIPPLVYFNCAEYAHNPELLSSHLFGHRQGAFTGANEHKTGLVEQADGGYLLLDEVHRLSYEGQEKLFSILDKGEYRPLGVSSQPRSISVRLICATTEPVGSALLRTFQRRIQVCIDLPGIHQRSVEEQIELIVGFLQRESRKIERTVSIDKPLLLWLLNKPLEGNIGQLKSDIQFLCAQAWASGMTEHNDTLQLDKRLAEMSVNPTPEQRLLVDTLFEGKARLNIDARTLPALKTSLATGAEIEESDLFYSFLTREYVNLRNSNVPPAETLAILKNKLSSIFEYGLYSRDSVAHPPRYGDQIEERVTLLIGCVEQVLGFSLPENLVNPLRKHFLALIGYVQRGLIPQLYSSSLILDRCKDEYDNATLLCRKINELLHIQCPATEVVWLCLFLKECRHYRQRIDASPDCGVILIAHGATTATSQAQYVNRVLERELFSAIDMPFEQSVHDTLETLTQMIQTRQYRRLILLVDIGSLIHFGSTISKLFQIDVLLMPNITLTSLLEVGLDLSYETSDLPQLTALLQSKNIPCQLCTPQQENGGKVLVISCITGMGTAEKIKKVLEESFGELMSQDTRMVILDYNEVRSLERVQQALNASERLAGIVGTFQPGLPDIPFISLEELFSEQGPELVLSLLTPDLSNAERRLEMERSAMRFISALTMESIINHISVLNPQRILKEMEGVFNHLTSSLSLKPSRQVTLRFLIHCCCMVERIVINRKPLQMALESQPNLDARAFSVIKSAFLPIEDAYAIRLSDAEYFYIYELLYS</sequence>
<protein>
    <recommendedName>
        <fullName evidence="7">Transcriptional regulatory protein DagR</fullName>
    </recommendedName>
    <alternativeName>
        <fullName evidence="6">RpoN-dependent activator DgaR</fullName>
    </alternativeName>
    <domain>
        <recommendedName>
            <fullName evidence="7">Putative phosphotransferase EIIA component</fullName>
            <ecNumber evidence="3">2.7.1.-</ecNumber>
        </recommendedName>
        <alternativeName>
            <fullName evidence="7">Putative PTS system EIIA component</fullName>
        </alternativeName>
    </domain>
</protein>
<evidence type="ECO:0000250" key="1"/>
<evidence type="ECO:0000255" key="2">
    <source>
        <dbReference type="PROSITE-ProRule" id="PRU00193"/>
    </source>
</evidence>
<evidence type="ECO:0000255" key="3">
    <source>
        <dbReference type="PROSITE-ProRule" id="PRU00419"/>
    </source>
</evidence>
<evidence type="ECO:0000255" key="4">
    <source>
        <dbReference type="PROSITE-ProRule" id="PRU00704"/>
    </source>
</evidence>
<evidence type="ECO:0000269" key="5">
    <source>
    </source>
</evidence>
<evidence type="ECO:0000303" key="6">
    <source>
    </source>
</evidence>
<evidence type="ECO:0000305" key="7"/>
<organism>
    <name type="scientific">Salmonella typhimurium (strain 14028s / SGSC 2262)</name>
    <dbReference type="NCBI Taxonomy" id="588858"/>
    <lineage>
        <taxon>Bacteria</taxon>
        <taxon>Pseudomonadati</taxon>
        <taxon>Pseudomonadota</taxon>
        <taxon>Gammaproteobacteria</taxon>
        <taxon>Enterobacterales</taxon>
        <taxon>Enterobacteriaceae</taxon>
        <taxon>Salmonella</taxon>
    </lineage>
</organism>
<name>DGAR_SALT1</name>
<accession>D0ZLR9</accession>
<dbReference type="EC" id="2.7.1.-" evidence="3"/>
<dbReference type="EMBL" id="CP001363">
    <property type="protein sequence ID" value="ACY90931.1"/>
    <property type="molecule type" value="Genomic_DNA"/>
</dbReference>
<dbReference type="SMR" id="D0ZLR9"/>
<dbReference type="KEGG" id="seo:STM14_4550"/>
<dbReference type="PATRIC" id="fig|588858.6.peg.4147"/>
<dbReference type="HOGENOM" id="CLU_014204_1_0_6"/>
<dbReference type="BioCyc" id="SENT588858:STM14_RS19930-MONOMER"/>
<dbReference type="Proteomes" id="UP000002695">
    <property type="component" value="Chromosome"/>
</dbReference>
<dbReference type="GO" id="GO:0016020">
    <property type="term" value="C:membrane"/>
    <property type="evidence" value="ECO:0007669"/>
    <property type="project" value="InterPro"/>
</dbReference>
<dbReference type="GO" id="GO:0005524">
    <property type="term" value="F:ATP binding"/>
    <property type="evidence" value="ECO:0007669"/>
    <property type="project" value="UniProtKB-KW"/>
</dbReference>
<dbReference type="GO" id="GO:0016887">
    <property type="term" value="F:ATP hydrolysis activity"/>
    <property type="evidence" value="ECO:0007669"/>
    <property type="project" value="InterPro"/>
</dbReference>
<dbReference type="GO" id="GO:0003677">
    <property type="term" value="F:DNA binding"/>
    <property type="evidence" value="ECO:0007669"/>
    <property type="project" value="UniProtKB-KW"/>
</dbReference>
<dbReference type="GO" id="GO:0016301">
    <property type="term" value="F:kinase activity"/>
    <property type="evidence" value="ECO:0007669"/>
    <property type="project" value="UniProtKB-KW"/>
</dbReference>
<dbReference type="GO" id="GO:0009401">
    <property type="term" value="P:phosphoenolpyruvate-dependent sugar phosphotransferase system"/>
    <property type="evidence" value="ECO:0007669"/>
    <property type="project" value="UniProtKB-KW"/>
</dbReference>
<dbReference type="GO" id="GO:0006355">
    <property type="term" value="P:regulation of DNA-templated transcription"/>
    <property type="evidence" value="ECO:0007669"/>
    <property type="project" value="InterPro"/>
</dbReference>
<dbReference type="CDD" id="cd00009">
    <property type="entry name" value="AAA"/>
    <property type="match status" value="1"/>
</dbReference>
<dbReference type="Gene3D" id="3.40.50.300">
    <property type="entry name" value="P-loop containing nucleotide triphosphate hydrolases"/>
    <property type="match status" value="1"/>
</dbReference>
<dbReference type="Gene3D" id="3.40.50.510">
    <property type="entry name" value="Phosphotransferase system, mannose-type IIA component"/>
    <property type="match status" value="1"/>
</dbReference>
<dbReference type="Gene3D" id="1.10.1790.10">
    <property type="entry name" value="PRD domain"/>
    <property type="match status" value="1"/>
</dbReference>
<dbReference type="InterPro" id="IPR003593">
    <property type="entry name" value="AAA+_ATPase"/>
</dbReference>
<dbReference type="InterPro" id="IPR027417">
    <property type="entry name" value="P-loop_NTPase"/>
</dbReference>
<dbReference type="InterPro" id="IPR011608">
    <property type="entry name" value="PRD"/>
</dbReference>
<dbReference type="InterPro" id="IPR036634">
    <property type="entry name" value="PRD_sf"/>
</dbReference>
<dbReference type="InterPro" id="IPR004701">
    <property type="entry name" value="PTS_EIIA_man-typ"/>
</dbReference>
<dbReference type="InterPro" id="IPR036662">
    <property type="entry name" value="PTS_EIIA_man-typ_sf"/>
</dbReference>
<dbReference type="InterPro" id="IPR002078">
    <property type="entry name" value="Sigma_54_int"/>
</dbReference>
<dbReference type="NCBIfam" id="NF047795">
    <property type="entry name" value="TransRegDagR"/>
    <property type="match status" value="1"/>
</dbReference>
<dbReference type="PANTHER" id="PTHR32071:SF38">
    <property type="entry name" value="PSP OPERON TRANSCRIPTIONAL ACTIVATOR"/>
    <property type="match status" value="1"/>
</dbReference>
<dbReference type="PANTHER" id="PTHR32071">
    <property type="entry name" value="TRANSCRIPTIONAL REGULATORY PROTEIN"/>
    <property type="match status" value="1"/>
</dbReference>
<dbReference type="Pfam" id="PF00874">
    <property type="entry name" value="PRD"/>
    <property type="match status" value="1"/>
</dbReference>
<dbReference type="Pfam" id="PF00158">
    <property type="entry name" value="Sigma54_activat"/>
    <property type="match status" value="1"/>
</dbReference>
<dbReference type="SMART" id="SM00382">
    <property type="entry name" value="AAA"/>
    <property type="match status" value="1"/>
</dbReference>
<dbReference type="SUPFAM" id="SSF52540">
    <property type="entry name" value="P-loop containing nucleoside triphosphate hydrolases"/>
    <property type="match status" value="1"/>
</dbReference>
<dbReference type="SUPFAM" id="SSF53062">
    <property type="entry name" value="PTS system fructose IIA component-like"/>
    <property type="match status" value="1"/>
</dbReference>
<dbReference type="SUPFAM" id="SSF63520">
    <property type="entry name" value="PTS-regulatory domain, PRD"/>
    <property type="match status" value="2"/>
</dbReference>
<dbReference type="PROSITE" id="PS51372">
    <property type="entry name" value="PRD_2"/>
    <property type="match status" value="2"/>
</dbReference>
<dbReference type="PROSITE" id="PS51096">
    <property type="entry name" value="PTS_EIIA_TYPE_4"/>
    <property type="match status" value="1"/>
</dbReference>
<dbReference type="PROSITE" id="PS50045">
    <property type="entry name" value="SIGMA54_INTERACT_4"/>
    <property type="match status" value="1"/>
</dbReference>
<gene>
    <name type="primary">dgaR</name>
    <name type="ordered locus">STM14_4550</name>
</gene>
<proteinExistence type="evidence at transcript level"/>
<feature type="chain" id="PRO_0000430796" description="Transcriptional regulatory protein DagR">
    <location>
        <begin position="1"/>
        <end position="932"/>
    </location>
</feature>
<feature type="domain" description="Sigma-54 factor interaction" evidence="2">
    <location>
        <begin position="111"/>
        <end position="343"/>
    </location>
</feature>
<feature type="domain" description="PRD 1" evidence="4">
    <location>
        <begin position="462"/>
        <end position="567"/>
    </location>
</feature>
<feature type="domain" description="PTS EIIA type-4" evidence="3">
    <location>
        <begin position="572"/>
        <end position="708"/>
    </location>
</feature>
<feature type="domain" description="PRD 2" evidence="4">
    <location>
        <begin position="835"/>
        <end position="932"/>
    </location>
</feature>
<feature type="active site" description="Tele-phosphohistidine intermediate" evidence="3">
    <location>
        <position position="580"/>
    </location>
</feature>
<feature type="binding site" evidence="2">
    <location>
        <begin position="141"/>
        <end position="148"/>
    </location>
    <ligand>
        <name>ATP</name>
        <dbReference type="ChEBI" id="CHEBI:30616"/>
    </ligand>
</feature>
<feature type="binding site" evidence="2">
    <location>
        <begin position="210"/>
        <end position="219"/>
    </location>
    <ligand>
        <name>ATP</name>
        <dbReference type="ChEBI" id="CHEBI:30616"/>
    </ligand>
</feature>
<feature type="modified residue" description="Phosphohistidine" evidence="4">
    <location>
        <position position="497"/>
    </location>
</feature>
<feature type="modified residue" description="Phosphohistidine" evidence="4">
    <location>
        <position position="870"/>
    </location>
</feature>
<reference key="1">
    <citation type="journal article" date="2010" name="J. Bacteriol.">
        <title>Short-term signatures of evolutionary change in the Salmonella enterica serovar typhimurium 14028 genome.</title>
        <authorList>
            <person name="Jarvik T."/>
            <person name="Smillie C."/>
            <person name="Groisman E.A."/>
            <person name="Ochman H."/>
        </authorList>
    </citation>
    <scope>NUCLEOTIDE SEQUENCE [LARGE SCALE GENOMIC DNA]</scope>
    <source>
        <strain>14028s / SGSC 2262</strain>
    </source>
</reference>
<reference key="2">
    <citation type="journal article" date="2013" name="J. Bacteriol.">
        <title>Salmonella utilizes D-glucosaminate via a mannose family phosphotransferase system permease and associated enzymes.</title>
        <authorList>
            <person name="Miller K.A."/>
            <person name="Phillips R.S."/>
            <person name="Mrazek J."/>
            <person name="Hoover T.R."/>
        </authorList>
    </citation>
    <scope>FUNCTION</scope>
    <scope>DISRUPTION PHENOTYPE</scope>
    <scope>INDUCTION</scope>
</reference>
<keyword id="KW-0010">Activator</keyword>
<keyword id="KW-0067">ATP-binding</keyword>
<keyword id="KW-0238">DNA-binding</keyword>
<keyword id="KW-0418">Kinase</keyword>
<keyword id="KW-0547">Nucleotide-binding</keyword>
<keyword id="KW-0597">Phosphoprotein</keyword>
<keyword id="KW-0598">Phosphotransferase system</keyword>
<keyword id="KW-0677">Repeat</keyword>
<keyword id="KW-0804">Transcription</keyword>
<keyword id="KW-0805">Transcription regulation</keyword>
<keyword id="KW-0808">Transferase</keyword>